<protein>
    <recommendedName>
        <fullName evidence="1">Imidazole glycerol phosphate synthase subunit HisF</fullName>
        <ecNumber evidence="1">4.3.2.10</ecNumber>
    </recommendedName>
    <alternativeName>
        <fullName evidence="1">IGP synthase cyclase subunit</fullName>
    </alternativeName>
    <alternativeName>
        <fullName evidence="1">IGP synthase subunit HisF</fullName>
    </alternativeName>
    <alternativeName>
        <fullName evidence="1">ImGP synthase subunit HisF</fullName>
        <shortName evidence="1">IGPS subunit HisF</shortName>
    </alternativeName>
</protein>
<feature type="chain" id="PRO_0000319452" description="Imidazole glycerol phosphate synthase subunit HisF">
    <location>
        <begin position="1"/>
        <end position="257"/>
    </location>
</feature>
<feature type="active site" evidence="1">
    <location>
        <position position="12"/>
    </location>
</feature>
<feature type="active site" evidence="1">
    <location>
        <position position="131"/>
    </location>
</feature>
<reference key="1">
    <citation type="journal article" date="2010" name="Genome Biol. Evol.">
        <title>Continuing evolution of Burkholderia mallei through genome reduction and large-scale rearrangements.</title>
        <authorList>
            <person name="Losada L."/>
            <person name="Ronning C.M."/>
            <person name="DeShazer D."/>
            <person name="Woods D."/>
            <person name="Fedorova N."/>
            <person name="Kim H.S."/>
            <person name="Shabalina S.A."/>
            <person name="Pearson T.R."/>
            <person name="Brinkac L."/>
            <person name="Tan P."/>
            <person name="Nandi T."/>
            <person name="Crabtree J."/>
            <person name="Badger J."/>
            <person name="Beckstrom-Sternberg S."/>
            <person name="Saqib M."/>
            <person name="Schutzer S.E."/>
            <person name="Keim P."/>
            <person name="Nierman W.C."/>
        </authorList>
    </citation>
    <scope>NUCLEOTIDE SEQUENCE [LARGE SCALE GENOMIC DNA]</scope>
    <source>
        <strain>1106a</strain>
    </source>
</reference>
<proteinExistence type="inferred from homology"/>
<evidence type="ECO:0000255" key="1">
    <source>
        <dbReference type="HAMAP-Rule" id="MF_01013"/>
    </source>
</evidence>
<evidence type="ECO:0000305" key="2"/>
<organism>
    <name type="scientific">Burkholderia pseudomallei (strain 1106a)</name>
    <dbReference type="NCBI Taxonomy" id="357348"/>
    <lineage>
        <taxon>Bacteria</taxon>
        <taxon>Pseudomonadati</taxon>
        <taxon>Pseudomonadota</taxon>
        <taxon>Betaproteobacteria</taxon>
        <taxon>Burkholderiales</taxon>
        <taxon>Burkholderiaceae</taxon>
        <taxon>Burkholderia</taxon>
        <taxon>pseudomallei group</taxon>
    </lineage>
</organism>
<comment type="function">
    <text evidence="1">IGPS catalyzes the conversion of PRFAR and glutamine to IGP, AICAR and glutamate. The HisF subunit catalyzes the cyclization activity that produces IGP and AICAR from PRFAR using the ammonia provided by the HisH subunit.</text>
</comment>
<comment type="catalytic activity">
    <reaction evidence="1">
        <text>5-[(5-phospho-1-deoxy-D-ribulos-1-ylimino)methylamino]-1-(5-phospho-beta-D-ribosyl)imidazole-4-carboxamide + L-glutamine = D-erythro-1-(imidazol-4-yl)glycerol 3-phosphate + 5-amino-1-(5-phospho-beta-D-ribosyl)imidazole-4-carboxamide + L-glutamate + H(+)</text>
        <dbReference type="Rhea" id="RHEA:24793"/>
        <dbReference type="ChEBI" id="CHEBI:15378"/>
        <dbReference type="ChEBI" id="CHEBI:29985"/>
        <dbReference type="ChEBI" id="CHEBI:58278"/>
        <dbReference type="ChEBI" id="CHEBI:58359"/>
        <dbReference type="ChEBI" id="CHEBI:58475"/>
        <dbReference type="ChEBI" id="CHEBI:58525"/>
        <dbReference type="EC" id="4.3.2.10"/>
    </reaction>
</comment>
<comment type="pathway">
    <text evidence="1">Amino-acid biosynthesis; L-histidine biosynthesis; L-histidine from 5-phospho-alpha-D-ribose 1-diphosphate: step 5/9.</text>
</comment>
<comment type="subunit">
    <text evidence="1">Heterodimer of HisH and HisF.</text>
</comment>
<comment type="subcellular location">
    <subcellularLocation>
        <location evidence="1">Cytoplasm</location>
    </subcellularLocation>
</comment>
<comment type="similarity">
    <text evidence="1">Belongs to the HisA/HisF family.</text>
</comment>
<comment type="sequence caution" evidence="2">
    <conflict type="erroneous initiation">
        <sequence resource="EMBL-CDS" id="ABN88831"/>
    </conflict>
</comment>
<keyword id="KW-0028">Amino-acid biosynthesis</keyword>
<keyword id="KW-0963">Cytoplasm</keyword>
<keyword id="KW-0368">Histidine biosynthesis</keyword>
<keyword id="KW-0456">Lyase</keyword>
<accession>A3P027</accession>
<gene>
    <name evidence="1" type="primary">hisF</name>
    <name type="ordered locus">BURPS1106A_3718</name>
</gene>
<dbReference type="EC" id="4.3.2.10" evidence="1"/>
<dbReference type="EMBL" id="CP000572">
    <property type="protein sequence ID" value="ABN88831.1"/>
    <property type="status" value="ALT_INIT"/>
    <property type="molecule type" value="Genomic_DNA"/>
</dbReference>
<dbReference type="RefSeq" id="WP_004550994.1">
    <property type="nucleotide sequence ID" value="NC_009076.1"/>
</dbReference>
<dbReference type="SMR" id="A3P027"/>
<dbReference type="GeneID" id="93061750"/>
<dbReference type="KEGG" id="bpl:BURPS1106A_3718"/>
<dbReference type="HOGENOM" id="CLU_048577_4_0_4"/>
<dbReference type="UniPathway" id="UPA00031">
    <property type="reaction ID" value="UER00010"/>
</dbReference>
<dbReference type="Proteomes" id="UP000006738">
    <property type="component" value="Chromosome I"/>
</dbReference>
<dbReference type="GO" id="GO:0005737">
    <property type="term" value="C:cytoplasm"/>
    <property type="evidence" value="ECO:0007669"/>
    <property type="project" value="UniProtKB-SubCell"/>
</dbReference>
<dbReference type="GO" id="GO:0000107">
    <property type="term" value="F:imidazoleglycerol-phosphate synthase activity"/>
    <property type="evidence" value="ECO:0007669"/>
    <property type="project" value="UniProtKB-UniRule"/>
</dbReference>
<dbReference type="GO" id="GO:0016829">
    <property type="term" value="F:lyase activity"/>
    <property type="evidence" value="ECO:0007669"/>
    <property type="project" value="UniProtKB-KW"/>
</dbReference>
<dbReference type="GO" id="GO:0000105">
    <property type="term" value="P:L-histidine biosynthetic process"/>
    <property type="evidence" value="ECO:0007669"/>
    <property type="project" value="UniProtKB-UniRule"/>
</dbReference>
<dbReference type="CDD" id="cd04731">
    <property type="entry name" value="HisF"/>
    <property type="match status" value="1"/>
</dbReference>
<dbReference type="FunFam" id="3.20.20.70:FF:000006">
    <property type="entry name" value="Imidazole glycerol phosphate synthase subunit HisF"/>
    <property type="match status" value="1"/>
</dbReference>
<dbReference type="Gene3D" id="3.20.20.70">
    <property type="entry name" value="Aldolase class I"/>
    <property type="match status" value="1"/>
</dbReference>
<dbReference type="HAMAP" id="MF_01013">
    <property type="entry name" value="HisF"/>
    <property type="match status" value="1"/>
</dbReference>
<dbReference type="InterPro" id="IPR013785">
    <property type="entry name" value="Aldolase_TIM"/>
</dbReference>
<dbReference type="InterPro" id="IPR006062">
    <property type="entry name" value="His_biosynth"/>
</dbReference>
<dbReference type="InterPro" id="IPR004651">
    <property type="entry name" value="HisF"/>
</dbReference>
<dbReference type="InterPro" id="IPR050064">
    <property type="entry name" value="IGPS_HisA/HisF"/>
</dbReference>
<dbReference type="InterPro" id="IPR011060">
    <property type="entry name" value="RibuloseP-bd_barrel"/>
</dbReference>
<dbReference type="NCBIfam" id="TIGR00735">
    <property type="entry name" value="hisF"/>
    <property type="match status" value="1"/>
</dbReference>
<dbReference type="PANTHER" id="PTHR21235:SF2">
    <property type="entry name" value="IMIDAZOLE GLYCEROL PHOSPHATE SYNTHASE HISHF"/>
    <property type="match status" value="1"/>
</dbReference>
<dbReference type="PANTHER" id="PTHR21235">
    <property type="entry name" value="IMIDAZOLE GLYCEROL PHOSPHATE SYNTHASE SUBUNIT HISF/H IGP SYNTHASE SUBUNIT HISF/H"/>
    <property type="match status" value="1"/>
</dbReference>
<dbReference type="Pfam" id="PF00977">
    <property type="entry name" value="His_biosynth"/>
    <property type="match status" value="1"/>
</dbReference>
<dbReference type="SUPFAM" id="SSF51366">
    <property type="entry name" value="Ribulose-phoshate binding barrel"/>
    <property type="match status" value="1"/>
</dbReference>
<name>HIS6_BURP0</name>
<sequence length="257" mass="26979">MALAKRIIPCLDVTAGRVVKGVNFVELRDAGDPVEIARRYDAQGADELTFLDITATSDGRDLILPIIEAVASQVFIPLTVGGGVRAVEDVRRLLNAGADKVSMNSSAVANPPLVRDAADKYGSQCIVVAIDAKRVSADGEPPRWEVFTHGGRKGTGLDAVEWARKMAELGAGEILLTSMDRDGTKAGFDLALTRAVSDAVPVPVIASGGVGSLEHLAAGITEGHADAVLAASIFHYGEHTVGEAKRFMAERGIAVRL</sequence>